<organism>
    <name type="scientific">Pseudomonas fluorescens (strain SBW25)</name>
    <dbReference type="NCBI Taxonomy" id="216595"/>
    <lineage>
        <taxon>Bacteria</taxon>
        <taxon>Pseudomonadati</taxon>
        <taxon>Pseudomonadota</taxon>
        <taxon>Gammaproteobacteria</taxon>
        <taxon>Pseudomonadales</taxon>
        <taxon>Pseudomonadaceae</taxon>
        <taxon>Pseudomonas</taxon>
    </lineage>
</organism>
<accession>C3K8U0</accession>
<keyword id="KW-0028">Amino-acid biosynthesis</keyword>
<keyword id="KW-0067">ATP-binding</keyword>
<keyword id="KW-0963">Cytoplasm</keyword>
<keyword id="KW-0368">Histidine biosynthesis</keyword>
<keyword id="KW-0378">Hydrolase</keyword>
<keyword id="KW-0547">Nucleotide-binding</keyword>
<protein>
    <recommendedName>
        <fullName evidence="1">Phosphoribosyl-ATP pyrophosphatase</fullName>
        <shortName evidence="1">PRA-PH</shortName>
        <ecNumber evidence="1">3.6.1.31</ecNumber>
    </recommendedName>
</protein>
<name>HIS2_PSEFS</name>
<reference key="1">
    <citation type="journal article" date="2009" name="Genome Biol.">
        <title>Genomic and genetic analyses of diversity and plant interactions of Pseudomonas fluorescens.</title>
        <authorList>
            <person name="Silby M.W."/>
            <person name="Cerdeno-Tarraga A.M."/>
            <person name="Vernikos G.S."/>
            <person name="Giddens S.R."/>
            <person name="Jackson R.W."/>
            <person name="Preston G.M."/>
            <person name="Zhang X.-X."/>
            <person name="Moon C.D."/>
            <person name="Gehrig S.M."/>
            <person name="Godfrey S.A.C."/>
            <person name="Knight C.G."/>
            <person name="Malone J.G."/>
            <person name="Robinson Z."/>
            <person name="Spiers A.J."/>
            <person name="Harris S."/>
            <person name="Challis G.L."/>
            <person name="Yaxley A.M."/>
            <person name="Harris D."/>
            <person name="Seeger K."/>
            <person name="Murphy L."/>
            <person name="Rutter S."/>
            <person name="Squares R."/>
            <person name="Quail M.A."/>
            <person name="Saunders E."/>
            <person name="Mavromatis K."/>
            <person name="Brettin T.S."/>
            <person name="Bentley S.D."/>
            <person name="Hothersall J."/>
            <person name="Stephens E."/>
            <person name="Thomas C.M."/>
            <person name="Parkhill J."/>
            <person name="Levy S.B."/>
            <person name="Rainey P.B."/>
            <person name="Thomson N.R."/>
        </authorList>
    </citation>
    <scope>NUCLEOTIDE SEQUENCE [LARGE SCALE GENOMIC DNA]</scope>
    <source>
        <strain>SBW25</strain>
    </source>
</reference>
<dbReference type="EC" id="3.6.1.31" evidence="1"/>
<dbReference type="EMBL" id="AM181176">
    <property type="protein sequence ID" value="CAY46662.1"/>
    <property type="molecule type" value="Genomic_DNA"/>
</dbReference>
<dbReference type="RefSeq" id="WP_003209299.1">
    <property type="nucleotide sequence ID" value="NC_012660.1"/>
</dbReference>
<dbReference type="SMR" id="C3K8U0"/>
<dbReference type="STRING" id="294.SRM1_00434"/>
<dbReference type="eggNOG" id="COG0140">
    <property type="taxonomic scope" value="Bacteria"/>
</dbReference>
<dbReference type="HOGENOM" id="CLU_123337_1_2_6"/>
<dbReference type="OrthoDB" id="9814738at2"/>
<dbReference type="UniPathway" id="UPA00031">
    <property type="reaction ID" value="UER00007"/>
</dbReference>
<dbReference type="GO" id="GO:0005737">
    <property type="term" value="C:cytoplasm"/>
    <property type="evidence" value="ECO:0007669"/>
    <property type="project" value="UniProtKB-SubCell"/>
</dbReference>
<dbReference type="GO" id="GO:0005524">
    <property type="term" value="F:ATP binding"/>
    <property type="evidence" value="ECO:0007669"/>
    <property type="project" value="UniProtKB-KW"/>
</dbReference>
<dbReference type="GO" id="GO:0004636">
    <property type="term" value="F:phosphoribosyl-ATP diphosphatase activity"/>
    <property type="evidence" value="ECO:0007669"/>
    <property type="project" value="UniProtKB-UniRule"/>
</dbReference>
<dbReference type="GO" id="GO:0000105">
    <property type="term" value="P:L-histidine biosynthetic process"/>
    <property type="evidence" value="ECO:0007669"/>
    <property type="project" value="UniProtKB-UniRule"/>
</dbReference>
<dbReference type="CDD" id="cd11534">
    <property type="entry name" value="NTP-PPase_HisIE_like"/>
    <property type="match status" value="1"/>
</dbReference>
<dbReference type="Gene3D" id="1.10.287.1080">
    <property type="entry name" value="MazG-like"/>
    <property type="match status" value="1"/>
</dbReference>
<dbReference type="HAMAP" id="MF_01020">
    <property type="entry name" value="HisE"/>
    <property type="match status" value="1"/>
</dbReference>
<dbReference type="InterPro" id="IPR008179">
    <property type="entry name" value="HisE"/>
</dbReference>
<dbReference type="InterPro" id="IPR021130">
    <property type="entry name" value="PRib-ATP_PPHydrolase-like"/>
</dbReference>
<dbReference type="NCBIfam" id="TIGR03188">
    <property type="entry name" value="histidine_hisI"/>
    <property type="match status" value="1"/>
</dbReference>
<dbReference type="NCBIfam" id="NF001611">
    <property type="entry name" value="PRK00400.1-3"/>
    <property type="match status" value="1"/>
</dbReference>
<dbReference type="PANTHER" id="PTHR42945">
    <property type="entry name" value="HISTIDINE BIOSYNTHESIS BIFUNCTIONAL PROTEIN"/>
    <property type="match status" value="1"/>
</dbReference>
<dbReference type="PANTHER" id="PTHR42945:SF9">
    <property type="entry name" value="HISTIDINE BIOSYNTHESIS BIFUNCTIONAL PROTEIN HISIE"/>
    <property type="match status" value="1"/>
</dbReference>
<dbReference type="Pfam" id="PF01503">
    <property type="entry name" value="PRA-PH"/>
    <property type="match status" value="1"/>
</dbReference>
<dbReference type="SUPFAM" id="SSF101386">
    <property type="entry name" value="all-alpha NTP pyrophosphatases"/>
    <property type="match status" value="1"/>
</dbReference>
<comment type="catalytic activity">
    <reaction evidence="1">
        <text>1-(5-phospho-beta-D-ribosyl)-ATP + H2O = 1-(5-phospho-beta-D-ribosyl)-5'-AMP + diphosphate + H(+)</text>
        <dbReference type="Rhea" id="RHEA:22828"/>
        <dbReference type="ChEBI" id="CHEBI:15377"/>
        <dbReference type="ChEBI" id="CHEBI:15378"/>
        <dbReference type="ChEBI" id="CHEBI:33019"/>
        <dbReference type="ChEBI" id="CHEBI:59457"/>
        <dbReference type="ChEBI" id="CHEBI:73183"/>
        <dbReference type="EC" id="3.6.1.31"/>
    </reaction>
</comment>
<comment type="pathway">
    <text evidence="1">Amino-acid biosynthesis; L-histidine biosynthesis; L-histidine from 5-phospho-alpha-D-ribose 1-diphosphate: step 2/9.</text>
</comment>
<comment type="subcellular location">
    <subcellularLocation>
        <location evidence="1">Cytoplasm</location>
    </subcellularLocation>
</comment>
<comment type="similarity">
    <text evidence="1">Belongs to the PRA-PH family.</text>
</comment>
<evidence type="ECO:0000255" key="1">
    <source>
        <dbReference type="HAMAP-Rule" id="MF_01020"/>
    </source>
</evidence>
<sequence>MSDTLNRVAQVLEDRKGADADSSYVASLYHKGLNKILEKLGEESVETIIAAKDAQISGDCSDVIYETADLWFHSLVMLAQLGQHPQAVLDELDRRFGLSGHAEKASRPSA</sequence>
<gene>
    <name evidence="1" type="primary">hisE</name>
    <name type="ordered locus">PFLU_0385</name>
</gene>
<feature type="chain" id="PRO_1000213288" description="Phosphoribosyl-ATP pyrophosphatase">
    <location>
        <begin position="1"/>
        <end position="110"/>
    </location>
</feature>
<proteinExistence type="inferred from homology"/>